<keyword id="KW-0025">Alternative splicing</keyword>
<keyword id="KW-0134">Cell wall</keyword>
<keyword id="KW-0961">Cell wall biogenesis/degradation</keyword>
<keyword id="KW-0325">Glycoprotein</keyword>
<keyword id="KW-0379">Hydroxylation</keyword>
<keyword id="KW-0433">Leucine-rich repeat</keyword>
<keyword id="KW-1185">Reference proteome</keyword>
<keyword id="KW-0677">Repeat</keyword>
<keyword id="KW-0964">Secreted</keyword>
<keyword id="KW-0732">Signal</keyword>
<proteinExistence type="evidence at transcript level"/>
<accession>O81765</accession>
<accession>Q1PE26</accession>
<name>PLRX4_ARATH</name>
<evidence type="ECO:0000250" key="1"/>
<evidence type="ECO:0000255" key="2"/>
<evidence type="ECO:0000256" key="3">
    <source>
        <dbReference type="SAM" id="MobiDB-lite"/>
    </source>
</evidence>
<evidence type="ECO:0000269" key="4">
    <source>
    </source>
</evidence>
<evidence type="ECO:0000303" key="5">
    <source>
    </source>
</evidence>
<protein>
    <recommendedName>
        <fullName>Pollen-specific leucine-rich repeat extensin-like protein 4</fullName>
        <shortName>AtPEX4</shortName>
        <shortName>Pollen-specific LRR/EXTENSIN4</shortName>
    </recommendedName>
    <alternativeName>
        <fullName>Cell wall hydroxyproline-rich glycoprotein</fullName>
    </alternativeName>
</protein>
<reference key="1">
    <citation type="journal article" date="1999" name="Nature">
        <title>Sequence and analysis of chromosome 4 of the plant Arabidopsis thaliana.</title>
        <authorList>
            <person name="Mayer K.F.X."/>
            <person name="Schueller C."/>
            <person name="Wambutt R."/>
            <person name="Murphy G."/>
            <person name="Volckaert G."/>
            <person name="Pohl T."/>
            <person name="Duesterhoeft A."/>
            <person name="Stiekema W."/>
            <person name="Entian K.-D."/>
            <person name="Terryn N."/>
            <person name="Harris B."/>
            <person name="Ansorge W."/>
            <person name="Brandt P."/>
            <person name="Grivell L.A."/>
            <person name="Rieger M."/>
            <person name="Weichselgartner M."/>
            <person name="de Simone V."/>
            <person name="Obermaier B."/>
            <person name="Mache R."/>
            <person name="Mueller M."/>
            <person name="Kreis M."/>
            <person name="Delseny M."/>
            <person name="Puigdomenech P."/>
            <person name="Watson M."/>
            <person name="Schmidtheini T."/>
            <person name="Reichert B."/>
            <person name="Portetelle D."/>
            <person name="Perez-Alonso M."/>
            <person name="Boutry M."/>
            <person name="Bancroft I."/>
            <person name="Vos P."/>
            <person name="Hoheisel J."/>
            <person name="Zimmermann W."/>
            <person name="Wedler H."/>
            <person name="Ridley P."/>
            <person name="Langham S.-A."/>
            <person name="McCullagh B."/>
            <person name="Bilham L."/>
            <person name="Robben J."/>
            <person name="van der Schueren J."/>
            <person name="Grymonprez B."/>
            <person name="Chuang Y.-J."/>
            <person name="Vandenbussche F."/>
            <person name="Braeken M."/>
            <person name="Weltjens I."/>
            <person name="Voet M."/>
            <person name="Bastiaens I."/>
            <person name="Aert R."/>
            <person name="Defoor E."/>
            <person name="Weitzenegger T."/>
            <person name="Bothe G."/>
            <person name="Ramsperger U."/>
            <person name="Hilbert H."/>
            <person name="Braun M."/>
            <person name="Holzer E."/>
            <person name="Brandt A."/>
            <person name="Peters S."/>
            <person name="van Staveren M."/>
            <person name="Dirkse W."/>
            <person name="Mooijman P."/>
            <person name="Klein Lankhorst R."/>
            <person name="Rose M."/>
            <person name="Hauf J."/>
            <person name="Koetter P."/>
            <person name="Berneiser S."/>
            <person name="Hempel S."/>
            <person name="Feldpausch M."/>
            <person name="Lamberth S."/>
            <person name="Van den Daele H."/>
            <person name="De Keyser A."/>
            <person name="Buysshaert C."/>
            <person name="Gielen J."/>
            <person name="Villarroel R."/>
            <person name="De Clercq R."/>
            <person name="van Montagu M."/>
            <person name="Rogers J."/>
            <person name="Cronin A."/>
            <person name="Quail M.A."/>
            <person name="Bray-Allen S."/>
            <person name="Clark L."/>
            <person name="Doggett J."/>
            <person name="Hall S."/>
            <person name="Kay M."/>
            <person name="Lennard N."/>
            <person name="McLay K."/>
            <person name="Mayes R."/>
            <person name="Pettett A."/>
            <person name="Rajandream M.A."/>
            <person name="Lyne M."/>
            <person name="Benes V."/>
            <person name="Rechmann S."/>
            <person name="Borkova D."/>
            <person name="Bloecker H."/>
            <person name="Scharfe M."/>
            <person name="Grimm M."/>
            <person name="Loehnert T.-H."/>
            <person name="Dose S."/>
            <person name="de Haan M."/>
            <person name="Maarse A.C."/>
            <person name="Schaefer M."/>
            <person name="Mueller-Auer S."/>
            <person name="Gabel C."/>
            <person name="Fuchs M."/>
            <person name="Fartmann B."/>
            <person name="Granderath K."/>
            <person name="Dauner D."/>
            <person name="Herzl A."/>
            <person name="Neumann S."/>
            <person name="Argiriou A."/>
            <person name="Vitale D."/>
            <person name="Liguori R."/>
            <person name="Piravandi E."/>
            <person name="Massenet O."/>
            <person name="Quigley F."/>
            <person name="Clabauld G."/>
            <person name="Muendlein A."/>
            <person name="Felber R."/>
            <person name="Schnabl S."/>
            <person name="Hiller R."/>
            <person name="Schmidt W."/>
            <person name="Lecharny A."/>
            <person name="Aubourg S."/>
            <person name="Chefdor F."/>
            <person name="Cooke R."/>
            <person name="Berger C."/>
            <person name="Monfort A."/>
            <person name="Casacuberta E."/>
            <person name="Gibbons T."/>
            <person name="Weber N."/>
            <person name="Vandenbol M."/>
            <person name="Bargues M."/>
            <person name="Terol J."/>
            <person name="Torres A."/>
            <person name="Perez-Perez A."/>
            <person name="Purnelle B."/>
            <person name="Bent E."/>
            <person name="Johnson S."/>
            <person name="Tacon D."/>
            <person name="Jesse T."/>
            <person name="Heijnen L."/>
            <person name="Schwarz S."/>
            <person name="Scholler P."/>
            <person name="Heber S."/>
            <person name="Francs P."/>
            <person name="Bielke C."/>
            <person name="Frishman D."/>
            <person name="Haase D."/>
            <person name="Lemcke K."/>
            <person name="Mewes H.-W."/>
            <person name="Stocker S."/>
            <person name="Zaccaria P."/>
            <person name="Bevan M."/>
            <person name="Wilson R.K."/>
            <person name="de la Bastide M."/>
            <person name="Habermann K."/>
            <person name="Parnell L."/>
            <person name="Dedhia N."/>
            <person name="Gnoj L."/>
            <person name="Schutz K."/>
            <person name="Huang E."/>
            <person name="Spiegel L."/>
            <person name="Sekhon M."/>
            <person name="Murray J."/>
            <person name="Sheet P."/>
            <person name="Cordes M."/>
            <person name="Abu-Threideh J."/>
            <person name="Stoneking T."/>
            <person name="Kalicki J."/>
            <person name="Graves T."/>
            <person name="Harmon G."/>
            <person name="Edwards J."/>
            <person name="Latreille P."/>
            <person name="Courtney L."/>
            <person name="Cloud J."/>
            <person name="Abbott A."/>
            <person name="Scott K."/>
            <person name="Johnson D."/>
            <person name="Minx P."/>
            <person name="Bentley D."/>
            <person name="Fulton B."/>
            <person name="Miller N."/>
            <person name="Greco T."/>
            <person name="Kemp K."/>
            <person name="Kramer J."/>
            <person name="Fulton L."/>
            <person name="Mardis E."/>
            <person name="Dante M."/>
            <person name="Pepin K."/>
            <person name="Hillier L.W."/>
            <person name="Nelson J."/>
            <person name="Spieth J."/>
            <person name="Ryan E."/>
            <person name="Andrews S."/>
            <person name="Geisel C."/>
            <person name="Layman D."/>
            <person name="Du H."/>
            <person name="Ali J."/>
            <person name="Berghoff A."/>
            <person name="Jones K."/>
            <person name="Drone K."/>
            <person name="Cotton M."/>
            <person name="Joshu C."/>
            <person name="Antonoiu B."/>
            <person name="Zidanic M."/>
            <person name="Strong C."/>
            <person name="Sun H."/>
            <person name="Lamar B."/>
            <person name="Yordan C."/>
            <person name="Ma P."/>
            <person name="Zhong J."/>
            <person name="Preston R."/>
            <person name="Vil D."/>
            <person name="Shekher M."/>
            <person name="Matero A."/>
            <person name="Shah R."/>
            <person name="Swaby I.K."/>
            <person name="O'Shaughnessy A."/>
            <person name="Rodriguez M."/>
            <person name="Hoffman J."/>
            <person name="Till S."/>
            <person name="Granat S."/>
            <person name="Shohdy N."/>
            <person name="Hasegawa A."/>
            <person name="Hameed A."/>
            <person name="Lodhi M."/>
            <person name="Johnson A."/>
            <person name="Chen E."/>
            <person name="Marra M.A."/>
            <person name="Martienssen R."/>
            <person name="McCombie W.R."/>
        </authorList>
    </citation>
    <scope>NUCLEOTIDE SEQUENCE [LARGE SCALE GENOMIC DNA]</scope>
    <source>
        <strain>cv. Columbia</strain>
    </source>
</reference>
<reference key="2">
    <citation type="journal article" date="2017" name="Plant J.">
        <title>Araport11: a complete reannotation of the Arabidopsis thaliana reference genome.</title>
        <authorList>
            <person name="Cheng C.Y."/>
            <person name="Krishnakumar V."/>
            <person name="Chan A.P."/>
            <person name="Thibaud-Nissen F."/>
            <person name="Schobel S."/>
            <person name="Town C.D."/>
        </authorList>
    </citation>
    <scope>GENOME REANNOTATION</scope>
    <source>
        <strain>cv. Columbia</strain>
    </source>
</reference>
<reference key="3">
    <citation type="journal article" date="2006" name="Plant Biotechnol. J.">
        <title>Simultaneous high-throughput recombinational cloning of open reading frames in closed and open configurations.</title>
        <authorList>
            <person name="Underwood B.A."/>
            <person name="Vanderhaeghen R."/>
            <person name="Whitford R."/>
            <person name="Town C.D."/>
            <person name="Hilson P."/>
        </authorList>
    </citation>
    <scope>NUCLEOTIDE SEQUENCE [LARGE SCALE MRNA] (ISOFORM 2)</scope>
    <source>
        <strain>cv. Columbia</strain>
    </source>
</reference>
<reference key="4">
    <citation type="journal article" date="2003" name="Plant Physiol.">
        <title>Whole-genome comparison of leucine-rich repeat extensins in Arabidopsis and rice. A conserved family of cell wall proteins form a vegetative and a reproductive clade.</title>
        <authorList>
            <person name="Baumberger N."/>
            <person name="Doesseger B."/>
            <person name="Guyot R."/>
            <person name="Diet A."/>
            <person name="Parsons R.L."/>
            <person name="Clark M.A."/>
            <person name="Simmons M.P."/>
            <person name="Bedinger P."/>
            <person name="Goff S.A."/>
            <person name="Ringli C."/>
            <person name="Keller B."/>
        </authorList>
    </citation>
    <scope>TISSUE SPECIFICITY</scope>
    <scope>GENE FAMILY</scope>
    <scope>NOMENCLATURE</scope>
</reference>
<gene>
    <name type="primary">PEX4</name>
    <name type="ordered locus">At4g33970</name>
    <name type="ORF">F17I5.160</name>
</gene>
<comment type="function">
    <text evidence="1">Modulates cell morphogenesis by regulating cell wall formation and assembly, and/or growth polarization.</text>
</comment>
<comment type="subcellular location">
    <subcellularLocation>
        <location evidence="1">Secreted</location>
        <location evidence="1">Cell wall</location>
    </subcellularLocation>
</comment>
<comment type="alternative products">
    <event type="alternative splicing"/>
    <isoform>
        <id>O81765-1</id>
        <name>1</name>
        <sequence type="displayed"/>
    </isoform>
    <isoform>
        <id>O81765-2</id>
        <name>2</name>
        <sequence type="described" ref="VSP_039479"/>
    </isoform>
</comment>
<comment type="tissue specificity">
    <text evidence="4">Expressed in flowers, stamen, pollen, and pollinated carpels.</text>
</comment>
<comment type="PTM">
    <text evidence="1">Hydroxylated on proline residues in the S-P-P-P-P repeat.</text>
</comment>
<comment type="PTM">
    <text evidence="1">O-glycosylated on hydroxyprolines.</text>
</comment>
<dbReference type="EMBL" id="AL031032">
    <property type="protein sequence ID" value="CAA19879.1"/>
    <property type="molecule type" value="Genomic_DNA"/>
</dbReference>
<dbReference type="EMBL" id="AL161584">
    <property type="protein sequence ID" value="CAB80114.1"/>
    <property type="molecule type" value="Genomic_DNA"/>
</dbReference>
<dbReference type="EMBL" id="CP002687">
    <property type="protein sequence ID" value="AEE86302.1"/>
    <property type="molecule type" value="Genomic_DNA"/>
</dbReference>
<dbReference type="EMBL" id="DQ446892">
    <property type="protein sequence ID" value="ABE66109.1"/>
    <property type="molecule type" value="mRNA"/>
</dbReference>
<dbReference type="PIR" id="T05225">
    <property type="entry name" value="T05225"/>
</dbReference>
<dbReference type="RefSeq" id="NP_195123.1">
    <molecule id="O81765-1"/>
    <property type="nucleotide sequence ID" value="NM_119558.3"/>
</dbReference>
<dbReference type="SMR" id="O81765"/>
<dbReference type="FunCoup" id="O81765">
    <property type="interactions" value="48"/>
</dbReference>
<dbReference type="STRING" id="3702.O81765"/>
<dbReference type="TCDB" id="3.A.20.1.2">
    <property type="family name" value="the peroxisomal protein importer (ppi) family"/>
</dbReference>
<dbReference type="GlyCosmos" id="O81765">
    <property type="glycosylation" value="3 sites, No reported glycans"/>
</dbReference>
<dbReference type="GlyGen" id="O81765">
    <property type="glycosylation" value="4 sites"/>
</dbReference>
<dbReference type="PaxDb" id="3702-AT4G33970.1"/>
<dbReference type="ProteomicsDB" id="236639">
    <molecule id="O81765-1"/>
</dbReference>
<dbReference type="EnsemblPlants" id="AT4G33970.1">
    <molecule id="O81765-1"/>
    <property type="protein sequence ID" value="AT4G33970.1"/>
    <property type="gene ID" value="AT4G33970"/>
</dbReference>
<dbReference type="GeneID" id="829543"/>
<dbReference type="Gramene" id="AT4G33970.1">
    <molecule id="O81765-1"/>
    <property type="protein sequence ID" value="AT4G33970.1"/>
    <property type="gene ID" value="AT4G33970"/>
</dbReference>
<dbReference type="KEGG" id="ath:AT4G33970"/>
<dbReference type="Araport" id="AT4G33970"/>
<dbReference type="TAIR" id="AT4G33970">
    <property type="gene designation" value="LRX11"/>
</dbReference>
<dbReference type="eggNOG" id="ENOG502QRPA">
    <property type="taxonomic scope" value="Eukaryota"/>
</dbReference>
<dbReference type="HOGENOM" id="CLU_000288_23_3_1"/>
<dbReference type="InParanoid" id="O81765"/>
<dbReference type="OMA" id="VCTENLH"/>
<dbReference type="PhylomeDB" id="O81765"/>
<dbReference type="PRO" id="PR:O81765"/>
<dbReference type="Proteomes" id="UP000006548">
    <property type="component" value="Chromosome 4"/>
</dbReference>
<dbReference type="ExpressionAtlas" id="O81765">
    <property type="expression patterns" value="baseline and differential"/>
</dbReference>
<dbReference type="GO" id="GO:0005576">
    <property type="term" value="C:extracellular region"/>
    <property type="evidence" value="ECO:0007669"/>
    <property type="project" value="UniProtKB-KW"/>
</dbReference>
<dbReference type="GO" id="GO:0005199">
    <property type="term" value="F:structural constituent of cell wall"/>
    <property type="evidence" value="ECO:0000250"/>
    <property type="project" value="TAIR"/>
</dbReference>
<dbReference type="GO" id="GO:0071555">
    <property type="term" value="P:cell wall organization"/>
    <property type="evidence" value="ECO:0007669"/>
    <property type="project" value="UniProtKB-KW"/>
</dbReference>
<dbReference type="GO" id="GO:0009860">
    <property type="term" value="P:pollen tube growth"/>
    <property type="evidence" value="ECO:0000316"/>
    <property type="project" value="TAIR"/>
</dbReference>
<dbReference type="FunFam" id="3.80.10.10:FF:000742">
    <property type="entry name" value="Pollen-specific leucine-rich repeat extensin-like protein 1"/>
    <property type="match status" value="1"/>
</dbReference>
<dbReference type="Gene3D" id="3.80.10.10">
    <property type="entry name" value="Ribonuclease Inhibitor"/>
    <property type="match status" value="1"/>
</dbReference>
<dbReference type="InterPro" id="IPR001611">
    <property type="entry name" value="Leu-rich_rpt"/>
</dbReference>
<dbReference type="InterPro" id="IPR032675">
    <property type="entry name" value="LRR_dom_sf"/>
</dbReference>
<dbReference type="InterPro" id="IPR051582">
    <property type="entry name" value="LRR_extensin-like_regulator"/>
</dbReference>
<dbReference type="PANTHER" id="PTHR32093">
    <property type="entry name" value="LEUCINE-RICH REPEAT EXTENSIN-LIKE PROTEIN 3-RELATED"/>
    <property type="match status" value="1"/>
</dbReference>
<dbReference type="PANTHER" id="PTHR32093:SF112">
    <property type="entry name" value="POLLEN-SPECIFIC LEUCINE-RICH REPEAT EXTENSIN-LIKE PROTEIN 4"/>
    <property type="match status" value="1"/>
</dbReference>
<dbReference type="Pfam" id="PF00560">
    <property type="entry name" value="LRR_1"/>
    <property type="match status" value="1"/>
</dbReference>
<dbReference type="PRINTS" id="PR01217">
    <property type="entry name" value="PRICHEXTENSN"/>
</dbReference>
<dbReference type="SUPFAM" id="SSF52058">
    <property type="entry name" value="L domain-like"/>
    <property type="match status" value="1"/>
</dbReference>
<feature type="signal peptide" evidence="2">
    <location>
        <begin position="1"/>
        <end position="39"/>
    </location>
</feature>
<feature type="chain" id="PRO_0000395471" description="Pollen-specific leucine-rich repeat extensin-like protein 4">
    <location>
        <begin position="40"/>
        <end position="699"/>
    </location>
</feature>
<feature type="repeat" description="LRR 1">
    <location>
        <begin position="133"/>
        <end position="157"/>
    </location>
</feature>
<feature type="repeat" description="LRR 2">
    <location>
        <begin position="158"/>
        <end position="180"/>
    </location>
</feature>
<feature type="repeat" description="LRR 3">
    <location>
        <begin position="182"/>
        <end position="205"/>
    </location>
</feature>
<feature type="repeat" description="LRR 4">
    <location>
        <begin position="206"/>
        <end position="229"/>
    </location>
</feature>
<feature type="repeat" description="LRR 5">
    <location>
        <begin position="231"/>
        <end position="251"/>
    </location>
</feature>
<feature type="repeat" description="LRR 6">
    <location>
        <begin position="253"/>
        <end position="275"/>
    </location>
</feature>
<feature type="repeat" description="LRR 7">
    <location>
        <begin position="276"/>
        <end position="299"/>
    </location>
</feature>
<feature type="repeat" description="LRR 8">
    <location>
        <begin position="301"/>
        <end position="323"/>
    </location>
</feature>
<feature type="repeat" description="LRR 9">
    <location>
        <begin position="324"/>
        <end position="347"/>
    </location>
</feature>
<feature type="region of interest" description="Disordered" evidence="3">
    <location>
        <begin position="411"/>
        <end position="699"/>
    </location>
</feature>
<feature type="region of interest" description="Contains the Ser-Pro(4) repeats">
    <location>
        <begin position="517"/>
        <end position="699"/>
    </location>
</feature>
<feature type="compositionally biased region" description="Pro residues" evidence="3">
    <location>
        <begin position="421"/>
        <end position="466"/>
    </location>
</feature>
<feature type="compositionally biased region" description="Pro residues" evidence="3">
    <location>
        <begin position="482"/>
        <end position="504"/>
    </location>
</feature>
<feature type="compositionally biased region" description="Pro residues" evidence="3">
    <location>
        <begin position="518"/>
        <end position="659"/>
    </location>
</feature>
<feature type="compositionally biased region" description="Pro residues" evidence="3">
    <location>
        <begin position="690"/>
        <end position="699"/>
    </location>
</feature>
<feature type="glycosylation site" description="N-linked (GlcNAc...) asparagine" evidence="2">
    <location>
        <position position="106"/>
    </location>
</feature>
<feature type="glycosylation site" description="N-linked (GlcNAc...) asparagine" evidence="2">
    <location>
        <position position="301"/>
    </location>
</feature>
<feature type="glycosylation site" description="N-linked (GlcNAc...) asparagine" evidence="2">
    <location>
        <position position="352"/>
    </location>
</feature>
<feature type="splice variant" id="VSP_039479" description="In isoform 2." evidence="5">
    <location>
        <begin position="104"/>
        <end position="584"/>
    </location>
</feature>
<sequence length="699" mass="75248">MPFYKQPWVFSKVFVLAMAKPPSFGCCFFLLFFSFLSSSFVSFALTDTEAAFIVQRQLLTLPDNGELPDDIEYEVDLKATFANTRLKRAYIALQAWKKAIFSDPFNTTGNWHGPHVCGYTGVVCAPALDDSDVTVVAGVDLNGADIAGHLPAELGLMTDVAMFHLNSNRFCGIIPKSFEKLKLMHEFDVSNNRFVGPFPNVVLSWPDVKYFDLRFNDFEGQVPPELFKKELDAIFLNDNRFTSVIPESLGESPASVVTFANNKFTGCIPKSIGNMKNLNEIVFMDNDLGGCFPSEIGKLSNVTVFDASKNSFIGRLPTSFVGLTSVEEIDISGNKLTGLVPHNICQLPNLVNLTYSYNYFSGQGGSCVPGGSRKEIALDDTRNCLASRPEQRSAQECAVVINRPVDCSKDKCAGGSSTPSKPSPVHKPTPVPTTPVHKPTPVPTTPVQKPSPVPTTPVQKPSPVPTTPVHEPSPVLATPVDKPSPVPSRPVQKPQPPKESPQPDDPYDQSPVTKRRSPPPAPVNSPPPPVYSPPPPPPPVHSPPPPVHSPPPPPVYSPPPPPPPVHSPPPPVFSPPPPVYSPPPPVHSPPPPVHSPPPPAPVHSPPPPVHSPPPPPPVYSPPPPVFSPPPSQSPPVVYSPPPRPPKINSPPVQSPPPAPVEKKETPPAHAPAPSDDEFIIPPFIGHQYASPPPPMFAGY</sequence>
<organism>
    <name type="scientific">Arabidopsis thaliana</name>
    <name type="common">Mouse-ear cress</name>
    <dbReference type="NCBI Taxonomy" id="3702"/>
    <lineage>
        <taxon>Eukaryota</taxon>
        <taxon>Viridiplantae</taxon>
        <taxon>Streptophyta</taxon>
        <taxon>Embryophyta</taxon>
        <taxon>Tracheophyta</taxon>
        <taxon>Spermatophyta</taxon>
        <taxon>Magnoliopsida</taxon>
        <taxon>eudicotyledons</taxon>
        <taxon>Gunneridae</taxon>
        <taxon>Pentapetalae</taxon>
        <taxon>rosids</taxon>
        <taxon>malvids</taxon>
        <taxon>Brassicales</taxon>
        <taxon>Brassicaceae</taxon>
        <taxon>Camelineae</taxon>
        <taxon>Arabidopsis</taxon>
    </lineage>
</organism>